<gene>
    <name evidence="1" type="primary">mnmE</name>
    <name evidence="1" type="synonym">trmE</name>
    <name type="ordered locus">BPUM_3733</name>
</gene>
<feature type="chain" id="PRO_0000345713" description="tRNA modification GTPase MnmE">
    <location>
        <begin position="1"/>
        <end position="459"/>
    </location>
</feature>
<feature type="domain" description="TrmE-type G">
    <location>
        <begin position="221"/>
        <end position="380"/>
    </location>
</feature>
<feature type="binding site" evidence="1">
    <location>
        <position position="20"/>
    </location>
    <ligand>
        <name>(6S)-5-formyl-5,6,7,8-tetrahydrofolate</name>
        <dbReference type="ChEBI" id="CHEBI:57457"/>
    </ligand>
</feature>
<feature type="binding site" evidence="1">
    <location>
        <position position="85"/>
    </location>
    <ligand>
        <name>(6S)-5-formyl-5,6,7,8-tetrahydrofolate</name>
        <dbReference type="ChEBI" id="CHEBI:57457"/>
    </ligand>
</feature>
<feature type="binding site" evidence="1">
    <location>
        <position position="124"/>
    </location>
    <ligand>
        <name>(6S)-5-formyl-5,6,7,8-tetrahydrofolate</name>
        <dbReference type="ChEBI" id="CHEBI:57457"/>
    </ligand>
</feature>
<feature type="binding site" evidence="1">
    <location>
        <begin position="231"/>
        <end position="236"/>
    </location>
    <ligand>
        <name>GTP</name>
        <dbReference type="ChEBI" id="CHEBI:37565"/>
    </ligand>
</feature>
<feature type="binding site" evidence="1">
    <location>
        <position position="231"/>
    </location>
    <ligand>
        <name>K(+)</name>
        <dbReference type="ChEBI" id="CHEBI:29103"/>
    </ligand>
</feature>
<feature type="binding site" evidence="1">
    <location>
        <position position="235"/>
    </location>
    <ligand>
        <name>Mg(2+)</name>
        <dbReference type="ChEBI" id="CHEBI:18420"/>
    </ligand>
</feature>
<feature type="binding site" evidence="1">
    <location>
        <begin position="250"/>
        <end position="256"/>
    </location>
    <ligand>
        <name>GTP</name>
        <dbReference type="ChEBI" id="CHEBI:37565"/>
    </ligand>
</feature>
<feature type="binding site" evidence="1">
    <location>
        <position position="250"/>
    </location>
    <ligand>
        <name>K(+)</name>
        <dbReference type="ChEBI" id="CHEBI:29103"/>
    </ligand>
</feature>
<feature type="binding site" evidence="1">
    <location>
        <position position="252"/>
    </location>
    <ligand>
        <name>K(+)</name>
        <dbReference type="ChEBI" id="CHEBI:29103"/>
    </ligand>
</feature>
<feature type="binding site" evidence="1">
    <location>
        <position position="255"/>
    </location>
    <ligand>
        <name>K(+)</name>
        <dbReference type="ChEBI" id="CHEBI:29103"/>
    </ligand>
</feature>
<feature type="binding site" evidence="1">
    <location>
        <position position="256"/>
    </location>
    <ligand>
        <name>Mg(2+)</name>
        <dbReference type="ChEBI" id="CHEBI:18420"/>
    </ligand>
</feature>
<feature type="binding site" evidence="1">
    <location>
        <begin position="275"/>
        <end position="278"/>
    </location>
    <ligand>
        <name>GTP</name>
        <dbReference type="ChEBI" id="CHEBI:37565"/>
    </ligand>
</feature>
<feature type="binding site" evidence="1">
    <location>
        <position position="459"/>
    </location>
    <ligand>
        <name>(6S)-5-formyl-5,6,7,8-tetrahydrofolate</name>
        <dbReference type="ChEBI" id="CHEBI:57457"/>
    </ligand>
</feature>
<sequence>MDTIAAISTPMGEGAIAIIRLSGPEAVQIADRMYKGPKEKKLVSVDSHTIHYGHIVDARTDQVIEEVMVSVLRAPKTFTREDVIEINCHGGIVTVNKVLQLALREGARLAEPGEFTKRAFLNGRIDLSQAEAVMDLIRAKTDRAMNVAITQMEGRLSGLVQRLRGEILETLAHIEVNIDYPEYDDVEEMTHRVLVEKATSVKKEIESLLSTSHQGKILREGLSTVIIGRPNVGKSSLLNSLVQETKAIVTDIPGTTRDVIEEYVNVRGVPLRLVDTAGIRETEDIVERIGVERSRQVLKEADLILLVLNYSEELSEEDIKLFEAVSGMDIIVIVNKTDLEPKLDVEKVKQLAKDRPVVTTSLLQEKGIDELEMAIQSLFFTGSIESGDLTYVSNTRHIALLQAAKQSIEDALEGIEMDVPIDIVQIDLTRCWEQLGEIIGDAVHESLIDQLFSQFCLGK</sequence>
<comment type="function">
    <text evidence="1">Exhibits a very high intrinsic GTPase hydrolysis rate. Involved in the addition of a carboxymethylaminomethyl (cmnm) group at the wobble position (U34) of certain tRNAs, forming tRNA-cmnm(5)s(2)U34.</text>
</comment>
<comment type="cofactor">
    <cofactor evidence="1">
        <name>K(+)</name>
        <dbReference type="ChEBI" id="CHEBI:29103"/>
    </cofactor>
    <text evidence="1">Binds 1 potassium ion per subunit.</text>
</comment>
<comment type="subunit">
    <text evidence="1">Homodimer. Heterotetramer of two MnmE and two MnmG subunits.</text>
</comment>
<comment type="subcellular location">
    <subcellularLocation>
        <location evidence="1">Cytoplasm</location>
    </subcellularLocation>
</comment>
<comment type="similarity">
    <text evidence="1">Belongs to the TRAFAC class TrmE-Era-EngA-EngB-Septin-like GTPase superfamily. TrmE GTPase family.</text>
</comment>
<accession>A8FJG0</accession>
<evidence type="ECO:0000255" key="1">
    <source>
        <dbReference type="HAMAP-Rule" id="MF_00379"/>
    </source>
</evidence>
<keyword id="KW-0963">Cytoplasm</keyword>
<keyword id="KW-0342">GTP-binding</keyword>
<keyword id="KW-0378">Hydrolase</keyword>
<keyword id="KW-0460">Magnesium</keyword>
<keyword id="KW-0479">Metal-binding</keyword>
<keyword id="KW-0547">Nucleotide-binding</keyword>
<keyword id="KW-0630">Potassium</keyword>
<keyword id="KW-0819">tRNA processing</keyword>
<organism>
    <name type="scientific">Bacillus pumilus (strain SAFR-032)</name>
    <dbReference type="NCBI Taxonomy" id="315750"/>
    <lineage>
        <taxon>Bacteria</taxon>
        <taxon>Bacillati</taxon>
        <taxon>Bacillota</taxon>
        <taxon>Bacilli</taxon>
        <taxon>Bacillales</taxon>
        <taxon>Bacillaceae</taxon>
        <taxon>Bacillus</taxon>
    </lineage>
</organism>
<proteinExistence type="inferred from homology"/>
<protein>
    <recommendedName>
        <fullName evidence="1">tRNA modification GTPase MnmE</fullName>
        <ecNumber evidence="1">3.6.-.-</ecNumber>
    </recommendedName>
</protein>
<dbReference type="EC" id="3.6.-.-" evidence="1"/>
<dbReference type="EMBL" id="CP000813">
    <property type="protein sequence ID" value="ABV64377.1"/>
    <property type="molecule type" value="Genomic_DNA"/>
</dbReference>
<dbReference type="RefSeq" id="WP_012011921.1">
    <property type="nucleotide sequence ID" value="NZ_VEIS01000021.1"/>
</dbReference>
<dbReference type="SMR" id="A8FJG0"/>
<dbReference type="STRING" id="315750.BPUM_3733"/>
<dbReference type="GeneID" id="5623026"/>
<dbReference type="KEGG" id="bpu:BPUM_3733"/>
<dbReference type="eggNOG" id="COG0486">
    <property type="taxonomic scope" value="Bacteria"/>
</dbReference>
<dbReference type="HOGENOM" id="CLU_019624_4_1_9"/>
<dbReference type="OrthoDB" id="9805918at2"/>
<dbReference type="Proteomes" id="UP000001355">
    <property type="component" value="Chromosome"/>
</dbReference>
<dbReference type="GO" id="GO:0005829">
    <property type="term" value="C:cytosol"/>
    <property type="evidence" value="ECO:0007669"/>
    <property type="project" value="TreeGrafter"/>
</dbReference>
<dbReference type="GO" id="GO:0005525">
    <property type="term" value="F:GTP binding"/>
    <property type="evidence" value="ECO:0007669"/>
    <property type="project" value="UniProtKB-UniRule"/>
</dbReference>
<dbReference type="GO" id="GO:0003924">
    <property type="term" value="F:GTPase activity"/>
    <property type="evidence" value="ECO:0007669"/>
    <property type="project" value="UniProtKB-UniRule"/>
</dbReference>
<dbReference type="GO" id="GO:0046872">
    <property type="term" value="F:metal ion binding"/>
    <property type="evidence" value="ECO:0007669"/>
    <property type="project" value="UniProtKB-KW"/>
</dbReference>
<dbReference type="GO" id="GO:0030488">
    <property type="term" value="P:tRNA methylation"/>
    <property type="evidence" value="ECO:0007669"/>
    <property type="project" value="TreeGrafter"/>
</dbReference>
<dbReference type="GO" id="GO:0002098">
    <property type="term" value="P:tRNA wobble uridine modification"/>
    <property type="evidence" value="ECO:0007669"/>
    <property type="project" value="TreeGrafter"/>
</dbReference>
<dbReference type="CDD" id="cd04164">
    <property type="entry name" value="trmE"/>
    <property type="match status" value="1"/>
</dbReference>
<dbReference type="CDD" id="cd14858">
    <property type="entry name" value="TrmE_N"/>
    <property type="match status" value="1"/>
</dbReference>
<dbReference type="FunFam" id="3.30.1360.120:FF:000003">
    <property type="entry name" value="tRNA modification GTPase MnmE"/>
    <property type="match status" value="1"/>
</dbReference>
<dbReference type="FunFam" id="3.40.50.300:FF:000494">
    <property type="entry name" value="tRNA modification GTPase MnmE"/>
    <property type="match status" value="1"/>
</dbReference>
<dbReference type="Gene3D" id="3.40.50.300">
    <property type="entry name" value="P-loop containing nucleotide triphosphate hydrolases"/>
    <property type="match status" value="1"/>
</dbReference>
<dbReference type="Gene3D" id="3.30.1360.120">
    <property type="entry name" value="Probable tRNA modification gtpase trme, domain 1"/>
    <property type="match status" value="1"/>
</dbReference>
<dbReference type="Gene3D" id="1.20.120.430">
    <property type="entry name" value="tRNA modification GTPase MnmE domain 2"/>
    <property type="match status" value="1"/>
</dbReference>
<dbReference type="HAMAP" id="MF_00379">
    <property type="entry name" value="GTPase_MnmE"/>
    <property type="match status" value="1"/>
</dbReference>
<dbReference type="InterPro" id="IPR031168">
    <property type="entry name" value="G_TrmE"/>
</dbReference>
<dbReference type="InterPro" id="IPR006073">
    <property type="entry name" value="GTP-bd"/>
</dbReference>
<dbReference type="InterPro" id="IPR018948">
    <property type="entry name" value="GTP-bd_TrmE_N"/>
</dbReference>
<dbReference type="InterPro" id="IPR004520">
    <property type="entry name" value="GTPase_MnmE"/>
</dbReference>
<dbReference type="InterPro" id="IPR027368">
    <property type="entry name" value="MnmE_dom2"/>
</dbReference>
<dbReference type="InterPro" id="IPR025867">
    <property type="entry name" value="MnmE_helical"/>
</dbReference>
<dbReference type="InterPro" id="IPR027417">
    <property type="entry name" value="P-loop_NTPase"/>
</dbReference>
<dbReference type="InterPro" id="IPR005225">
    <property type="entry name" value="Small_GTP-bd"/>
</dbReference>
<dbReference type="InterPro" id="IPR027266">
    <property type="entry name" value="TrmE/GcvT_dom1"/>
</dbReference>
<dbReference type="NCBIfam" id="TIGR00450">
    <property type="entry name" value="mnmE_trmE_thdF"/>
    <property type="match status" value="1"/>
</dbReference>
<dbReference type="NCBIfam" id="NF003661">
    <property type="entry name" value="PRK05291.1-3"/>
    <property type="match status" value="1"/>
</dbReference>
<dbReference type="NCBIfam" id="TIGR00231">
    <property type="entry name" value="small_GTP"/>
    <property type="match status" value="1"/>
</dbReference>
<dbReference type="PANTHER" id="PTHR42714">
    <property type="entry name" value="TRNA MODIFICATION GTPASE GTPBP3"/>
    <property type="match status" value="1"/>
</dbReference>
<dbReference type="PANTHER" id="PTHR42714:SF2">
    <property type="entry name" value="TRNA MODIFICATION GTPASE GTPBP3, MITOCHONDRIAL"/>
    <property type="match status" value="1"/>
</dbReference>
<dbReference type="Pfam" id="PF01926">
    <property type="entry name" value="MMR_HSR1"/>
    <property type="match status" value="1"/>
</dbReference>
<dbReference type="Pfam" id="PF12631">
    <property type="entry name" value="MnmE_helical"/>
    <property type="match status" value="1"/>
</dbReference>
<dbReference type="Pfam" id="PF10396">
    <property type="entry name" value="TrmE_N"/>
    <property type="match status" value="1"/>
</dbReference>
<dbReference type="PRINTS" id="PR00449">
    <property type="entry name" value="RASTRNSFRMNG"/>
</dbReference>
<dbReference type="SUPFAM" id="SSF52540">
    <property type="entry name" value="P-loop containing nucleoside triphosphate hydrolases"/>
    <property type="match status" value="1"/>
</dbReference>
<dbReference type="PROSITE" id="PS51709">
    <property type="entry name" value="G_TRME"/>
    <property type="match status" value="1"/>
</dbReference>
<reference key="1">
    <citation type="journal article" date="2007" name="PLoS ONE">
        <title>Paradoxical DNA repair and peroxide resistance gene conservation in Bacillus pumilus SAFR-032.</title>
        <authorList>
            <person name="Gioia J."/>
            <person name="Yerrapragada S."/>
            <person name="Qin X."/>
            <person name="Jiang H."/>
            <person name="Igboeli O.C."/>
            <person name="Muzny D."/>
            <person name="Dugan-Rocha S."/>
            <person name="Ding Y."/>
            <person name="Hawes A."/>
            <person name="Liu W."/>
            <person name="Perez L."/>
            <person name="Kovar C."/>
            <person name="Dinh H."/>
            <person name="Lee S."/>
            <person name="Nazareth L."/>
            <person name="Blyth P."/>
            <person name="Holder M."/>
            <person name="Buhay C."/>
            <person name="Tirumalai M.R."/>
            <person name="Liu Y."/>
            <person name="Dasgupta I."/>
            <person name="Bokhetache L."/>
            <person name="Fujita M."/>
            <person name="Karouia F."/>
            <person name="Eswara Moorthy P."/>
            <person name="Siefert J."/>
            <person name="Uzman A."/>
            <person name="Buzumbo P."/>
            <person name="Verma A."/>
            <person name="Zwiya H."/>
            <person name="McWilliams B.D."/>
            <person name="Olowu A."/>
            <person name="Clinkenbeard K.D."/>
            <person name="Newcombe D."/>
            <person name="Golebiewski L."/>
            <person name="Petrosino J.F."/>
            <person name="Nicholson W.L."/>
            <person name="Fox G.E."/>
            <person name="Venkateswaran K."/>
            <person name="Highlander S.K."/>
            <person name="Weinstock G.M."/>
        </authorList>
    </citation>
    <scope>NUCLEOTIDE SEQUENCE [LARGE SCALE GENOMIC DNA]</scope>
    <source>
        <strain>SAFR-032</strain>
    </source>
</reference>
<name>MNME_BACP2</name>